<evidence type="ECO:0000255" key="1">
    <source>
        <dbReference type="HAMAP-Rule" id="MF_01038"/>
    </source>
</evidence>
<dbReference type="EC" id="5.4.2.12" evidence="1"/>
<dbReference type="EMBL" id="CP000720">
    <property type="protein sequence ID" value="ABS47332.1"/>
    <property type="molecule type" value="Genomic_DNA"/>
</dbReference>
<dbReference type="SMR" id="A7FCU8"/>
<dbReference type="KEGG" id="ypi:YpsIP31758_0075"/>
<dbReference type="HOGENOM" id="CLU_026099_2_0_6"/>
<dbReference type="UniPathway" id="UPA00109">
    <property type="reaction ID" value="UER00186"/>
</dbReference>
<dbReference type="Proteomes" id="UP000002412">
    <property type="component" value="Chromosome"/>
</dbReference>
<dbReference type="GO" id="GO:0005829">
    <property type="term" value="C:cytosol"/>
    <property type="evidence" value="ECO:0007669"/>
    <property type="project" value="TreeGrafter"/>
</dbReference>
<dbReference type="GO" id="GO:0030145">
    <property type="term" value="F:manganese ion binding"/>
    <property type="evidence" value="ECO:0007669"/>
    <property type="project" value="UniProtKB-UniRule"/>
</dbReference>
<dbReference type="GO" id="GO:0004619">
    <property type="term" value="F:phosphoglycerate mutase activity"/>
    <property type="evidence" value="ECO:0007669"/>
    <property type="project" value="UniProtKB-EC"/>
</dbReference>
<dbReference type="GO" id="GO:0006007">
    <property type="term" value="P:glucose catabolic process"/>
    <property type="evidence" value="ECO:0007669"/>
    <property type="project" value="InterPro"/>
</dbReference>
<dbReference type="GO" id="GO:0006096">
    <property type="term" value="P:glycolytic process"/>
    <property type="evidence" value="ECO:0007669"/>
    <property type="project" value="UniProtKB-UniRule"/>
</dbReference>
<dbReference type="CDD" id="cd16010">
    <property type="entry name" value="iPGM"/>
    <property type="match status" value="1"/>
</dbReference>
<dbReference type="FunFam" id="3.40.1450.10:FF:000001">
    <property type="entry name" value="2,3-bisphosphoglycerate-independent phosphoglycerate mutase"/>
    <property type="match status" value="1"/>
</dbReference>
<dbReference type="FunFam" id="3.40.720.10:FF:000001">
    <property type="entry name" value="2,3-bisphosphoglycerate-independent phosphoglycerate mutase"/>
    <property type="match status" value="1"/>
</dbReference>
<dbReference type="Gene3D" id="3.40.720.10">
    <property type="entry name" value="Alkaline Phosphatase, subunit A"/>
    <property type="match status" value="1"/>
</dbReference>
<dbReference type="Gene3D" id="3.40.1450.10">
    <property type="entry name" value="BPG-independent phosphoglycerate mutase, domain B"/>
    <property type="match status" value="1"/>
</dbReference>
<dbReference type="HAMAP" id="MF_01038">
    <property type="entry name" value="GpmI"/>
    <property type="match status" value="1"/>
</dbReference>
<dbReference type="InterPro" id="IPR017850">
    <property type="entry name" value="Alkaline_phosphatase_core_sf"/>
</dbReference>
<dbReference type="InterPro" id="IPR011258">
    <property type="entry name" value="BPG-indep_PGM_N"/>
</dbReference>
<dbReference type="InterPro" id="IPR006124">
    <property type="entry name" value="Metalloenzyme"/>
</dbReference>
<dbReference type="InterPro" id="IPR036646">
    <property type="entry name" value="PGAM_B_sf"/>
</dbReference>
<dbReference type="InterPro" id="IPR005995">
    <property type="entry name" value="Pgm_bpd_ind"/>
</dbReference>
<dbReference type="NCBIfam" id="TIGR01307">
    <property type="entry name" value="pgm_bpd_ind"/>
    <property type="match status" value="1"/>
</dbReference>
<dbReference type="NCBIfam" id="NF003897">
    <property type="entry name" value="PRK05434.1-5"/>
    <property type="match status" value="1"/>
</dbReference>
<dbReference type="PANTHER" id="PTHR31637">
    <property type="entry name" value="2,3-BISPHOSPHOGLYCERATE-INDEPENDENT PHOSPHOGLYCERATE MUTASE"/>
    <property type="match status" value="1"/>
</dbReference>
<dbReference type="PANTHER" id="PTHR31637:SF0">
    <property type="entry name" value="2,3-BISPHOSPHOGLYCERATE-INDEPENDENT PHOSPHOGLYCERATE MUTASE"/>
    <property type="match status" value="1"/>
</dbReference>
<dbReference type="Pfam" id="PF06415">
    <property type="entry name" value="iPGM_N"/>
    <property type="match status" value="1"/>
</dbReference>
<dbReference type="Pfam" id="PF01676">
    <property type="entry name" value="Metalloenzyme"/>
    <property type="match status" value="1"/>
</dbReference>
<dbReference type="PIRSF" id="PIRSF001492">
    <property type="entry name" value="IPGAM"/>
    <property type="match status" value="1"/>
</dbReference>
<dbReference type="SUPFAM" id="SSF64158">
    <property type="entry name" value="2,3-Bisphosphoglycerate-independent phosphoglycerate mutase, substrate-binding domain"/>
    <property type="match status" value="1"/>
</dbReference>
<dbReference type="SUPFAM" id="SSF53649">
    <property type="entry name" value="Alkaline phosphatase-like"/>
    <property type="match status" value="1"/>
</dbReference>
<gene>
    <name evidence="1" type="primary">gpmI</name>
    <name type="ordered locus">YpsIP31758_0075</name>
</gene>
<accession>A7FCU8</accession>
<organism>
    <name type="scientific">Yersinia pseudotuberculosis serotype O:1b (strain IP 31758)</name>
    <dbReference type="NCBI Taxonomy" id="349747"/>
    <lineage>
        <taxon>Bacteria</taxon>
        <taxon>Pseudomonadati</taxon>
        <taxon>Pseudomonadota</taxon>
        <taxon>Gammaproteobacteria</taxon>
        <taxon>Enterobacterales</taxon>
        <taxon>Yersiniaceae</taxon>
        <taxon>Yersinia</taxon>
    </lineage>
</organism>
<comment type="function">
    <text evidence="1">Catalyzes the interconversion of 2-phosphoglycerate and 3-phosphoglycerate.</text>
</comment>
<comment type="catalytic activity">
    <reaction evidence="1">
        <text>(2R)-2-phosphoglycerate = (2R)-3-phosphoglycerate</text>
        <dbReference type="Rhea" id="RHEA:15901"/>
        <dbReference type="ChEBI" id="CHEBI:58272"/>
        <dbReference type="ChEBI" id="CHEBI:58289"/>
        <dbReference type="EC" id="5.4.2.12"/>
    </reaction>
</comment>
<comment type="cofactor">
    <cofactor evidence="1">
        <name>Mn(2+)</name>
        <dbReference type="ChEBI" id="CHEBI:29035"/>
    </cofactor>
    <text evidence="1">Binds 2 manganese ions per subunit.</text>
</comment>
<comment type="pathway">
    <text evidence="1">Carbohydrate degradation; glycolysis; pyruvate from D-glyceraldehyde 3-phosphate: step 3/5.</text>
</comment>
<comment type="subunit">
    <text evidence="1">Monomer.</text>
</comment>
<comment type="similarity">
    <text evidence="1">Belongs to the BPG-independent phosphoglycerate mutase family.</text>
</comment>
<feature type="chain" id="PRO_1000064019" description="2,3-bisphosphoglycerate-independent phosphoglycerate mutase">
    <location>
        <begin position="1"/>
        <end position="515"/>
    </location>
</feature>
<feature type="active site" description="Phosphoserine intermediate" evidence="1">
    <location>
        <position position="64"/>
    </location>
</feature>
<feature type="binding site" evidence="1">
    <location>
        <position position="14"/>
    </location>
    <ligand>
        <name>Mn(2+)</name>
        <dbReference type="ChEBI" id="CHEBI:29035"/>
        <label>2</label>
    </ligand>
</feature>
<feature type="binding site" evidence="1">
    <location>
        <position position="64"/>
    </location>
    <ligand>
        <name>Mn(2+)</name>
        <dbReference type="ChEBI" id="CHEBI:29035"/>
        <label>2</label>
    </ligand>
</feature>
<feature type="binding site" evidence="1">
    <location>
        <position position="125"/>
    </location>
    <ligand>
        <name>substrate</name>
    </ligand>
</feature>
<feature type="binding site" evidence="1">
    <location>
        <begin position="155"/>
        <end position="156"/>
    </location>
    <ligand>
        <name>substrate</name>
    </ligand>
</feature>
<feature type="binding site" evidence="1">
    <location>
        <position position="187"/>
    </location>
    <ligand>
        <name>substrate</name>
    </ligand>
</feature>
<feature type="binding site" evidence="1">
    <location>
        <position position="193"/>
    </location>
    <ligand>
        <name>substrate</name>
    </ligand>
</feature>
<feature type="binding site" evidence="1">
    <location>
        <begin position="263"/>
        <end position="266"/>
    </location>
    <ligand>
        <name>substrate</name>
    </ligand>
</feature>
<feature type="binding site" evidence="1">
    <location>
        <position position="337"/>
    </location>
    <ligand>
        <name>substrate</name>
    </ligand>
</feature>
<feature type="binding site" evidence="1">
    <location>
        <position position="404"/>
    </location>
    <ligand>
        <name>Mn(2+)</name>
        <dbReference type="ChEBI" id="CHEBI:29035"/>
        <label>1</label>
    </ligand>
</feature>
<feature type="binding site" evidence="1">
    <location>
        <position position="408"/>
    </location>
    <ligand>
        <name>Mn(2+)</name>
        <dbReference type="ChEBI" id="CHEBI:29035"/>
        <label>1</label>
    </ligand>
</feature>
<feature type="binding site" evidence="1">
    <location>
        <position position="445"/>
    </location>
    <ligand>
        <name>Mn(2+)</name>
        <dbReference type="ChEBI" id="CHEBI:29035"/>
        <label>2</label>
    </ligand>
</feature>
<feature type="binding site" evidence="1">
    <location>
        <position position="446"/>
    </location>
    <ligand>
        <name>Mn(2+)</name>
        <dbReference type="ChEBI" id="CHEBI:29035"/>
        <label>2</label>
    </ligand>
</feature>
<feature type="binding site" evidence="1">
    <location>
        <position position="464"/>
    </location>
    <ligand>
        <name>Mn(2+)</name>
        <dbReference type="ChEBI" id="CHEBI:29035"/>
        <label>1</label>
    </ligand>
</feature>
<keyword id="KW-0324">Glycolysis</keyword>
<keyword id="KW-0413">Isomerase</keyword>
<keyword id="KW-0464">Manganese</keyword>
<keyword id="KW-0479">Metal-binding</keyword>
<proteinExistence type="inferred from homology"/>
<sequence>MSSTKKPLVLTILDGYGHREEQQDNAILNAKTPVMDVLWQQQPHTLIAASGLDVGLPDGQMGNSEVGHVNLGAGRIVYQDLTRLDKEIKDGDFFTNPTLTAAVDNAVKTGKAVHIMGLLSAGGVHSHEDHIMAMVELAAKRGATAIYLHAFLDGRDTPPRSAESSLKRFTAKFAELGNGRIASIIGRYYAMDRDNRWDRVQLAYDLLTQAKGEFTADNAVAGLQAAYARGENDEFVKPTVIQATGEADAAMNEGDTLIFMNFRADRVRQITRTFVNADFDGFKRDKVVNFGDFIMLTEYAADIKVACAYPPASLTNTFGEWLMKHDKTQLRISETEKYAHVTFFYNGGVEEPFKGEDRILINSPKVATYDLQPEMSSAELTEKLVSAIGSGKYDVIICNYPNGDMVGHTGDYDAAVKAVETLDNCIEQVVAAVKAADGQLLITADHGNAEQMRDPATGQAHTAHTSLPVPLIYVGNKAVKAVEGGKLSDIAPTMLSLMEMEIPQEMTGKPLFIVE</sequence>
<name>GPMI_YERP3</name>
<reference key="1">
    <citation type="journal article" date="2007" name="PLoS Genet.">
        <title>The complete genome sequence of Yersinia pseudotuberculosis IP31758, the causative agent of Far East scarlet-like fever.</title>
        <authorList>
            <person name="Eppinger M."/>
            <person name="Rosovitz M.J."/>
            <person name="Fricke W.F."/>
            <person name="Rasko D.A."/>
            <person name="Kokorina G."/>
            <person name="Fayolle C."/>
            <person name="Lindler L.E."/>
            <person name="Carniel E."/>
            <person name="Ravel J."/>
        </authorList>
    </citation>
    <scope>NUCLEOTIDE SEQUENCE [LARGE SCALE GENOMIC DNA]</scope>
    <source>
        <strain>IP 31758</strain>
    </source>
</reference>
<protein>
    <recommendedName>
        <fullName evidence="1">2,3-bisphosphoglycerate-independent phosphoglycerate mutase</fullName>
        <shortName evidence="1">BPG-independent PGAM</shortName>
        <shortName evidence="1">Phosphoglyceromutase</shortName>
        <shortName evidence="1">iPGM</shortName>
        <ecNumber evidence="1">5.4.2.12</ecNumber>
    </recommendedName>
</protein>